<protein>
    <recommendedName>
        <fullName evidence="1">Membrane-bound lytic murein transglycosylase C</fullName>
        <ecNumber evidence="1">4.2.2.n1</ecNumber>
    </recommendedName>
    <alternativeName>
        <fullName evidence="1">Murein lyase C</fullName>
    </alternativeName>
</protein>
<evidence type="ECO:0000255" key="1">
    <source>
        <dbReference type="HAMAP-Rule" id="MF_01616"/>
    </source>
</evidence>
<organism>
    <name type="scientific">Escherichia coli O45:K1 (strain S88 / ExPEC)</name>
    <dbReference type="NCBI Taxonomy" id="585035"/>
    <lineage>
        <taxon>Bacteria</taxon>
        <taxon>Pseudomonadati</taxon>
        <taxon>Pseudomonadota</taxon>
        <taxon>Gammaproteobacteria</taxon>
        <taxon>Enterobacterales</taxon>
        <taxon>Enterobacteriaceae</taxon>
        <taxon>Escherichia</taxon>
    </lineage>
</organism>
<sequence>MKKYLALALIAPLLISCSTTKKGDTYNEAWVKDTNGFDILMGQFAHNIENIWGFKEVVIAGPKDYVKYTDQYQTRSHINFDDGTITIETIAGTEPAAHLRRAIIKTLLMGDDPSSVDLYSDVDDITISKEPFLYGQVVDNTGQPIRWEGRASNFADYLLKNRLKSRSNGLRIIYSVTINMVPNHLDKRAHKYLGMVRQASRKYGVDESLILAIMQTESSFNPYAVSRSDALGLMQVVQHTAGKDVFRSQGKSGTPSRSFLFDPASNIDTGTAYLAMLNNVYLGGIDNPTSRRYAVITAYNGGAGSVLRVFSNDKIQAANIINTMTPGDVYQTLTTRHPSAESRRYLYKVNTAQKSYRRR</sequence>
<feature type="signal peptide" evidence="1">
    <location>
        <begin position="1"/>
        <end position="16"/>
    </location>
</feature>
<feature type="chain" id="PRO_1000185918" description="Membrane-bound lytic murein transglycosylase C">
    <location>
        <begin position="17"/>
        <end position="359"/>
    </location>
</feature>
<feature type="lipid moiety-binding region" description="N-palmitoyl cysteine" evidence="1">
    <location>
        <position position="17"/>
    </location>
</feature>
<feature type="lipid moiety-binding region" description="S-diacylglycerol cysteine" evidence="1">
    <location>
        <position position="17"/>
    </location>
</feature>
<keyword id="KW-0998">Cell outer membrane</keyword>
<keyword id="KW-0961">Cell wall biogenesis/degradation</keyword>
<keyword id="KW-0449">Lipoprotein</keyword>
<keyword id="KW-0456">Lyase</keyword>
<keyword id="KW-0472">Membrane</keyword>
<keyword id="KW-0564">Palmitate</keyword>
<keyword id="KW-1185">Reference proteome</keyword>
<keyword id="KW-0732">Signal</keyword>
<name>MLTC_ECO45</name>
<gene>
    <name evidence="1" type="primary">mltC</name>
    <name type="ordered locus">ECS88_3246</name>
</gene>
<reference key="1">
    <citation type="journal article" date="2009" name="PLoS Genet.">
        <title>Organised genome dynamics in the Escherichia coli species results in highly diverse adaptive paths.</title>
        <authorList>
            <person name="Touchon M."/>
            <person name="Hoede C."/>
            <person name="Tenaillon O."/>
            <person name="Barbe V."/>
            <person name="Baeriswyl S."/>
            <person name="Bidet P."/>
            <person name="Bingen E."/>
            <person name="Bonacorsi S."/>
            <person name="Bouchier C."/>
            <person name="Bouvet O."/>
            <person name="Calteau A."/>
            <person name="Chiapello H."/>
            <person name="Clermont O."/>
            <person name="Cruveiller S."/>
            <person name="Danchin A."/>
            <person name="Diard M."/>
            <person name="Dossat C."/>
            <person name="Karoui M.E."/>
            <person name="Frapy E."/>
            <person name="Garry L."/>
            <person name="Ghigo J.M."/>
            <person name="Gilles A.M."/>
            <person name="Johnson J."/>
            <person name="Le Bouguenec C."/>
            <person name="Lescat M."/>
            <person name="Mangenot S."/>
            <person name="Martinez-Jehanne V."/>
            <person name="Matic I."/>
            <person name="Nassif X."/>
            <person name="Oztas S."/>
            <person name="Petit M.A."/>
            <person name="Pichon C."/>
            <person name="Rouy Z."/>
            <person name="Ruf C.S."/>
            <person name="Schneider D."/>
            <person name="Tourret J."/>
            <person name="Vacherie B."/>
            <person name="Vallenet D."/>
            <person name="Medigue C."/>
            <person name="Rocha E.P.C."/>
            <person name="Denamur E."/>
        </authorList>
    </citation>
    <scope>NUCLEOTIDE SEQUENCE [LARGE SCALE GENOMIC DNA]</scope>
    <source>
        <strain>S88 / ExPEC</strain>
    </source>
</reference>
<accession>B7MN10</accession>
<proteinExistence type="inferred from homology"/>
<dbReference type="EC" id="4.2.2.n1" evidence="1"/>
<dbReference type="EMBL" id="CU928161">
    <property type="protein sequence ID" value="CAR04480.1"/>
    <property type="molecule type" value="Genomic_DNA"/>
</dbReference>
<dbReference type="RefSeq" id="WP_000760323.1">
    <property type="nucleotide sequence ID" value="NC_011742.1"/>
</dbReference>
<dbReference type="SMR" id="B7MN10"/>
<dbReference type="CAZy" id="GH23">
    <property type="family name" value="Glycoside Hydrolase Family 23"/>
</dbReference>
<dbReference type="GeneID" id="86861053"/>
<dbReference type="KEGG" id="ecz:ECS88_3246"/>
<dbReference type="HOGENOM" id="CLU_044583_0_0_6"/>
<dbReference type="Proteomes" id="UP000000747">
    <property type="component" value="Chromosome"/>
</dbReference>
<dbReference type="GO" id="GO:0009279">
    <property type="term" value="C:cell outer membrane"/>
    <property type="evidence" value="ECO:0007669"/>
    <property type="project" value="UniProtKB-SubCell"/>
</dbReference>
<dbReference type="GO" id="GO:0016798">
    <property type="term" value="F:hydrolase activity, acting on glycosyl bonds"/>
    <property type="evidence" value="ECO:0007669"/>
    <property type="project" value="InterPro"/>
</dbReference>
<dbReference type="GO" id="GO:0008933">
    <property type="term" value="F:peptidoglycan lytic transglycosylase activity"/>
    <property type="evidence" value="ECO:0007669"/>
    <property type="project" value="UniProtKB-UniRule"/>
</dbReference>
<dbReference type="GO" id="GO:0016998">
    <property type="term" value="P:cell wall macromolecule catabolic process"/>
    <property type="evidence" value="ECO:0007669"/>
    <property type="project" value="UniProtKB-UniRule"/>
</dbReference>
<dbReference type="GO" id="GO:0071555">
    <property type="term" value="P:cell wall organization"/>
    <property type="evidence" value="ECO:0007669"/>
    <property type="project" value="UniProtKB-KW"/>
</dbReference>
<dbReference type="GO" id="GO:0000270">
    <property type="term" value="P:peptidoglycan metabolic process"/>
    <property type="evidence" value="ECO:0007669"/>
    <property type="project" value="InterPro"/>
</dbReference>
<dbReference type="CDD" id="cd16893">
    <property type="entry name" value="LT_MltC_MltE"/>
    <property type="match status" value="1"/>
</dbReference>
<dbReference type="FunFam" id="1.10.530.10:FF:000002">
    <property type="entry name" value="Membrane-bound lytic murein transglycosylase C"/>
    <property type="match status" value="1"/>
</dbReference>
<dbReference type="Gene3D" id="1.10.530.10">
    <property type="match status" value="1"/>
</dbReference>
<dbReference type="HAMAP" id="MF_01616">
    <property type="entry name" value="MltC"/>
    <property type="match status" value="1"/>
</dbReference>
<dbReference type="InterPro" id="IPR023346">
    <property type="entry name" value="Lysozyme-like_dom_sf"/>
</dbReference>
<dbReference type="InterPro" id="IPR023664">
    <property type="entry name" value="Murein_transglycosylaseC"/>
</dbReference>
<dbReference type="InterPro" id="IPR024570">
    <property type="entry name" value="Murein_transglycosylaseC_N"/>
</dbReference>
<dbReference type="InterPro" id="IPR000189">
    <property type="entry name" value="Transglyc_AS"/>
</dbReference>
<dbReference type="InterPro" id="IPR008258">
    <property type="entry name" value="Transglycosylase_SLT_dom_1"/>
</dbReference>
<dbReference type="NCBIfam" id="NF008670">
    <property type="entry name" value="PRK11671.1"/>
    <property type="match status" value="1"/>
</dbReference>
<dbReference type="PANTHER" id="PTHR37423:SF2">
    <property type="entry name" value="MEMBRANE-BOUND LYTIC MUREIN TRANSGLYCOSYLASE C"/>
    <property type="match status" value="1"/>
</dbReference>
<dbReference type="PANTHER" id="PTHR37423">
    <property type="entry name" value="SOLUBLE LYTIC MUREIN TRANSGLYCOSYLASE-RELATED"/>
    <property type="match status" value="1"/>
</dbReference>
<dbReference type="Pfam" id="PF11873">
    <property type="entry name" value="Mltc_N"/>
    <property type="match status" value="1"/>
</dbReference>
<dbReference type="Pfam" id="PF01464">
    <property type="entry name" value="SLT"/>
    <property type="match status" value="1"/>
</dbReference>
<dbReference type="SUPFAM" id="SSF53955">
    <property type="entry name" value="Lysozyme-like"/>
    <property type="match status" value="1"/>
</dbReference>
<dbReference type="PROSITE" id="PS51257">
    <property type="entry name" value="PROKAR_LIPOPROTEIN"/>
    <property type="match status" value="1"/>
</dbReference>
<dbReference type="PROSITE" id="PS00922">
    <property type="entry name" value="TRANSGLYCOSYLASE"/>
    <property type="match status" value="1"/>
</dbReference>
<comment type="function">
    <text evidence="1">Murein-degrading enzyme. May play a role in recycling of muropeptides during cell elongation and/or cell division.</text>
</comment>
<comment type="catalytic activity">
    <reaction evidence="1">
        <text>Exolytic cleavage of the (1-&gt;4)-beta-glycosidic linkage between N-acetylmuramic acid (MurNAc) and N-acetylglucosamine (GlcNAc) residues in peptidoglycan, from either the reducing or the non-reducing ends of the peptidoglycan chains, with concomitant formation of a 1,6-anhydrobond in the MurNAc residue.</text>
        <dbReference type="EC" id="4.2.2.n1"/>
    </reaction>
</comment>
<comment type="subcellular location">
    <subcellularLocation>
        <location evidence="1">Cell outer membrane</location>
        <topology evidence="1">Lipid-anchor</topology>
    </subcellularLocation>
</comment>
<comment type="similarity">
    <text evidence="1">Belongs to the transglycosylase Slt family.</text>
</comment>